<name>VIT2_CAEEL</name>
<organism>
    <name type="scientific">Caenorhabditis elegans</name>
    <dbReference type="NCBI Taxonomy" id="6239"/>
    <lineage>
        <taxon>Eukaryota</taxon>
        <taxon>Metazoa</taxon>
        <taxon>Ecdysozoa</taxon>
        <taxon>Nematoda</taxon>
        <taxon>Chromadorea</taxon>
        <taxon>Rhabditida</taxon>
        <taxon>Rhabditina</taxon>
        <taxon>Rhabditomorpha</taxon>
        <taxon>Rhabditoidea</taxon>
        <taxon>Rhabditidae</taxon>
        <taxon>Peloderinae</taxon>
        <taxon>Caenorhabditis</taxon>
    </lineage>
</organism>
<evidence type="ECO:0000255" key="1"/>
<evidence type="ECO:0000255" key="2">
    <source>
        <dbReference type="PROSITE-ProRule" id="PRU00557"/>
    </source>
</evidence>
<evidence type="ECO:0000255" key="3">
    <source>
        <dbReference type="PROSITE-ProRule" id="PRU00580"/>
    </source>
</evidence>
<evidence type="ECO:0000256" key="4">
    <source>
        <dbReference type="SAM" id="MobiDB-lite"/>
    </source>
</evidence>
<evidence type="ECO:0000269" key="5">
    <source>
    </source>
</evidence>
<evidence type="ECO:0000269" key="6">
    <source>
    </source>
</evidence>
<evidence type="ECO:0000269" key="7">
    <source>
    </source>
</evidence>
<evidence type="ECO:0000269" key="8">
    <source>
    </source>
</evidence>
<evidence type="ECO:0000305" key="9"/>
<evidence type="ECO:0000305" key="10">
    <source>
    </source>
</evidence>
<proteinExistence type="evidence at protein level"/>
<accession>P05690</accession>
<dbReference type="EMBL" id="X56212">
    <property type="protein sequence ID" value="CAA39669.1"/>
    <property type="molecule type" value="Genomic_DNA"/>
</dbReference>
<dbReference type="EMBL" id="FO080659">
    <property type="protein sequence ID" value="CCD65563.1"/>
    <property type="molecule type" value="Genomic_DNA"/>
</dbReference>
<dbReference type="EMBL" id="M10105">
    <property type="protein sequence ID" value="AAA28162.1"/>
    <property type="molecule type" value="Genomic_DNA"/>
</dbReference>
<dbReference type="EMBL" id="X02753">
    <property type="protein sequence ID" value="CAA26530.1"/>
    <property type="molecule type" value="Genomic_DNA"/>
</dbReference>
<dbReference type="PIR" id="A43081">
    <property type="entry name" value="A43081"/>
</dbReference>
<dbReference type="PIR" id="F89528">
    <property type="entry name" value="F89528"/>
</dbReference>
<dbReference type="RefSeq" id="NP_508868.1">
    <property type="nucleotide sequence ID" value="NM_076467.7"/>
</dbReference>
<dbReference type="SMR" id="P05690"/>
<dbReference type="BioGRID" id="45716">
    <property type="interactions" value="23"/>
</dbReference>
<dbReference type="DIP" id="DIP-27283N"/>
<dbReference type="FunCoup" id="P05690">
    <property type="interactions" value="435"/>
</dbReference>
<dbReference type="IntAct" id="P05690">
    <property type="interactions" value="3"/>
</dbReference>
<dbReference type="STRING" id="6239.C42D8.2a.1"/>
<dbReference type="GlyCosmos" id="P05690">
    <property type="glycosylation" value="1 site, No reported glycans"/>
</dbReference>
<dbReference type="iPTMnet" id="P05690"/>
<dbReference type="PaxDb" id="6239-C42D8.2a"/>
<dbReference type="PeptideAtlas" id="P05690"/>
<dbReference type="EnsemblMetazoa" id="C42D8.2.1">
    <property type="protein sequence ID" value="C42D8.2.1"/>
    <property type="gene ID" value="WBGene00006926"/>
</dbReference>
<dbReference type="GeneID" id="180781"/>
<dbReference type="KEGG" id="cel:CELE_C42D8.2"/>
<dbReference type="UCSC" id="C42D8.2a.1">
    <property type="organism name" value="c. elegans"/>
</dbReference>
<dbReference type="AGR" id="WB:WBGene00006926"/>
<dbReference type="CTD" id="180781"/>
<dbReference type="WormBase" id="C42D8.2">
    <property type="protein sequence ID" value="CE06950"/>
    <property type="gene ID" value="WBGene00006926"/>
    <property type="gene designation" value="vit-2"/>
</dbReference>
<dbReference type="eggNOG" id="KOG4338">
    <property type="taxonomic scope" value="Eukaryota"/>
</dbReference>
<dbReference type="GeneTree" id="ENSGT00530000064273"/>
<dbReference type="HOGENOM" id="CLU_003821_0_0_1"/>
<dbReference type="InParanoid" id="P05690"/>
<dbReference type="OMA" id="YGHCHHR"/>
<dbReference type="OrthoDB" id="5825149at2759"/>
<dbReference type="PhylomeDB" id="P05690"/>
<dbReference type="SignaLink" id="P05690"/>
<dbReference type="PRO" id="PR:P05690"/>
<dbReference type="Proteomes" id="UP000001940">
    <property type="component" value="Chromosome X"/>
</dbReference>
<dbReference type="Bgee" id="WBGene00006926">
    <property type="expression patterns" value="Expressed in adult organism and 2 other cell types or tissues"/>
</dbReference>
<dbReference type="GO" id="GO:0031410">
    <property type="term" value="C:cytoplasmic vesicle"/>
    <property type="evidence" value="ECO:0000314"/>
    <property type="project" value="WormBase"/>
</dbReference>
<dbReference type="GO" id="GO:0005576">
    <property type="term" value="C:extracellular region"/>
    <property type="evidence" value="ECO:0007669"/>
    <property type="project" value="UniProtKB-SubCell"/>
</dbReference>
<dbReference type="GO" id="GO:0031983">
    <property type="term" value="C:vesicle lumen"/>
    <property type="evidence" value="ECO:0000314"/>
    <property type="project" value="WormBase"/>
</dbReference>
<dbReference type="GO" id="GO:0042718">
    <property type="term" value="C:yolk granule"/>
    <property type="evidence" value="ECO:0000314"/>
    <property type="project" value="WormBase"/>
</dbReference>
<dbReference type="GO" id="GO:0005319">
    <property type="term" value="F:lipid transporter activity"/>
    <property type="evidence" value="ECO:0000318"/>
    <property type="project" value="GO_Central"/>
</dbReference>
<dbReference type="GO" id="GO:0045735">
    <property type="term" value="F:nutrient reservoir activity"/>
    <property type="evidence" value="ECO:0007669"/>
    <property type="project" value="UniProtKB-KW"/>
</dbReference>
<dbReference type="FunFam" id="1.25.10.20:FF:000003">
    <property type="entry name" value="Vitellogenin C"/>
    <property type="match status" value="1"/>
</dbReference>
<dbReference type="FunFam" id="2.30.230.10:FF:000004">
    <property type="entry name" value="Vitellogenin-1"/>
    <property type="match status" value="1"/>
</dbReference>
<dbReference type="FunFam" id="2.20.80.10:FF:000004">
    <property type="entry name" value="Vitellogenin-3"/>
    <property type="match status" value="1"/>
</dbReference>
<dbReference type="Gene3D" id="2.30.230.10">
    <property type="entry name" value="Lipovitellin, beta-sheet shell regions, chain A"/>
    <property type="match status" value="1"/>
</dbReference>
<dbReference type="Gene3D" id="2.20.80.10">
    <property type="entry name" value="Lipovitellin-phosvitin complex, chain A, domain 4"/>
    <property type="match status" value="1"/>
</dbReference>
<dbReference type="Gene3D" id="1.25.10.20">
    <property type="entry name" value="Vitellinogen, superhelical"/>
    <property type="match status" value="1"/>
</dbReference>
<dbReference type="InterPro" id="IPR015819">
    <property type="entry name" value="Lipid_transp_b-sht_shell"/>
</dbReference>
<dbReference type="InterPro" id="IPR011030">
    <property type="entry name" value="Lipovitellin_superhlx_dom"/>
</dbReference>
<dbReference type="InterPro" id="IPR015816">
    <property type="entry name" value="Vitellinogen_b-sht_N"/>
</dbReference>
<dbReference type="InterPro" id="IPR015255">
    <property type="entry name" value="Vitellinogen_open_b-sht"/>
</dbReference>
<dbReference type="InterPro" id="IPR050733">
    <property type="entry name" value="Vitellogenin/Apolipophorin"/>
</dbReference>
<dbReference type="InterPro" id="IPR001747">
    <property type="entry name" value="Vitellogenin_N"/>
</dbReference>
<dbReference type="InterPro" id="IPR001846">
    <property type="entry name" value="VWF_type-D"/>
</dbReference>
<dbReference type="PANTHER" id="PTHR23345:SF12">
    <property type="entry name" value="VITELLOGENIN-1-RELATED"/>
    <property type="match status" value="1"/>
</dbReference>
<dbReference type="PANTHER" id="PTHR23345">
    <property type="entry name" value="VITELLOGENIN-RELATED"/>
    <property type="match status" value="1"/>
</dbReference>
<dbReference type="Pfam" id="PF09172">
    <property type="entry name" value="Vit_open_b-sht"/>
    <property type="match status" value="1"/>
</dbReference>
<dbReference type="Pfam" id="PF01347">
    <property type="entry name" value="Vitellogenin_N"/>
    <property type="match status" value="1"/>
</dbReference>
<dbReference type="Pfam" id="PF00094">
    <property type="entry name" value="VWD"/>
    <property type="match status" value="1"/>
</dbReference>
<dbReference type="SMART" id="SM01169">
    <property type="entry name" value="DUF1943"/>
    <property type="match status" value="1"/>
</dbReference>
<dbReference type="SMART" id="SM00638">
    <property type="entry name" value="LPD_N"/>
    <property type="match status" value="1"/>
</dbReference>
<dbReference type="SMART" id="SM00216">
    <property type="entry name" value="VWD"/>
    <property type="match status" value="1"/>
</dbReference>
<dbReference type="SUPFAM" id="SSF56968">
    <property type="entry name" value="Lipovitellin-phosvitin complex, beta-sheet shell regions"/>
    <property type="match status" value="2"/>
</dbReference>
<dbReference type="SUPFAM" id="SSF48431">
    <property type="entry name" value="Lipovitellin-phosvitin complex, superhelical domain"/>
    <property type="match status" value="1"/>
</dbReference>
<dbReference type="PROSITE" id="PS51211">
    <property type="entry name" value="VITELLOGENIN"/>
    <property type="match status" value="1"/>
</dbReference>
<dbReference type="PROSITE" id="PS51233">
    <property type="entry name" value="VWFD"/>
    <property type="match status" value="1"/>
</dbReference>
<comment type="function">
    <text evidence="8 9">Precursor of the egg-yolk proteins that are sources of nutrients during embryonic development (Probable). Together with other vitellogenins, may play a role in modulating life-span, acting via induction of autophagy and lysosomal lipolysis (PubMed:26671266).</text>
</comment>
<comment type="subcellular location">
    <subcellularLocation>
        <location evidence="10">Secreted</location>
    </subcellularLocation>
</comment>
<comment type="tissue specificity">
    <text evidence="10">Expressed in the intestine of adult hermaphrodites.</text>
</comment>
<comment type="disruption phenotype">
    <text evidence="8">Simultaneous RNAi-mediated knockdown of vitellogenins vit-1, vit-2, vit-3, vit-4 and vit-5 increases life span, causes accumulation of neutral lipid and an increase in lgg-1 foci in the proximal intestine; however, does not affect fertility or pharyngeal pumping rates (PubMed:26671266). Expression of transcription factors pha-4 and daf-16 are increased (PubMed:26671266).</text>
</comment>
<comment type="caution">
    <text evidence="10">High sequence similarity with other vitellogenin genes means that assigning functions to individual proteins is difficult; authors sometimes refer to VITs or vitellogenins.</text>
</comment>
<keyword id="KW-0903">Direct protein sequencing</keyword>
<keyword id="KW-1015">Disulfide bond</keyword>
<keyword id="KW-0325">Glycoprotein</keyword>
<keyword id="KW-1185">Reference proteome</keyword>
<keyword id="KW-0964">Secreted</keyword>
<keyword id="KW-0732">Signal</keyword>
<keyword id="KW-0758">Storage protein</keyword>
<reference key="1">
    <citation type="journal article" date="1991" name="J. Mol. Evol.">
        <title>Vitellogenin motifs conserved in nematodes and vertebrates.</title>
        <authorList>
            <person name="Spieth J."/>
            <person name="Nettleton M."/>
            <person name="Zucker-Aprison E."/>
            <person name="Lea K."/>
            <person name="Blumenthal T."/>
        </authorList>
    </citation>
    <scope>NUCLEOTIDE SEQUENCE [GENOMIC DNA]</scope>
    <source>
        <strain>Bristol N2</strain>
    </source>
</reference>
<reference key="2">
    <citation type="journal article" date="1998" name="Science">
        <title>Genome sequence of the nematode C. elegans: a platform for investigating biology.</title>
        <authorList>
            <consortium name="The C. elegans sequencing consortium"/>
        </authorList>
    </citation>
    <scope>NUCLEOTIDE SEQUENCE [LARGE SCALE GENOMIC DNA]</scope>
    <source>
        <strain>Bristol N2</strain>
    </source>
</reference>
<reference key="3">
    <citation type="journal article" date="1985" name="Mol. Cell. Biol.">
        <title>The Caenorhabditis elegans vitellogenin gene family includes a gene encoding a distantly related protein.</title>
        <authorList>
            <person name="Spieth J."/>
            <person name="Blumenthal T."/>
        </authorList>
    </citation>
    <scope>NUCLEOTIDE SEQUENCE [GENOMIC DNA] OF 1-99</scope>
</reference>
<reference key="4">
    <citation type="journal article" date="1985" name="Nucleic Acids Res.">
        <title>The C. elegans vitellogenin genes: short sequence repeats in the promoter regions and homology to the vertebrate genes.</title>
        <authorList>
            <person name="Spieth J."/>
            <person name="Denison K."/>
            <person name="Kirtland S."/>
            <person name="Cane J."/>
            <person name="Blumenthal T."/>
        </authorList>
    </citation>
    <scope>NUCLEOTIDE SEQUENCE [GENOMIC DNA] OF 1-71</scope>
    <scope>PARTIAL PROTEIN SEQUENCE</scope>
</reference>
<reference key="5">
    <citation type="journal article" date="2003" name="Nat. Biotechnol.">
        <title>Lectin affinity capture, isotope-coded tagging and mass spectrometry to identify N-linked glycoproteins.</title>
        <authorList>
            <person name="Kaji H."/>
            <person name="Saito H."/>
            <person name="Yamauchi Y."/>
            <person name="Shinkawa T."/>
            <person name="Taoka M."/>
            <person name="Hirabayashi J."/>
            <person name="Kasai K."/>
            <person name="Takahashi N."/>
            <person name="Isobe T."/>
        </authorList>
    </citation>
    <scope>GLYCOSYLATION [LARGE SCALE ANALYSIS] AT ASN-1268</scope>
    <scope>IDENTIFICATION BY MASS SPECTROMETRY</scope>
    <source>
        <strain>Bristol N2</strain>
    </source>
</reference>
<reference key="6">
    <citation type="journal article" date="2005" name="Glycobiology">
        <title>Identification of the hydrophobic glycoproteins of Caenorhabditis elegans.</title>
        <authorList>
            <person name="Fan X."/>
            <person name="She Y.-M."/>
            <person name="Bagshaw R.D."/>
            <person name="Callahan J.W."/>
            <person name="Schachter H."/>
            <person name="Mahuran D.J."/>
        </authorList>
    </citation>
    <scope>GLYCOSYLATION [LARGE SCALE ANALYSIS] AT ASN-1268</scope>
    <scope>IDENTIFICATION BY MASS SPECTROMETRY</scope>
</reference>
<reference key="7">
    <citation type="journal article" date="2007" name="Mol. Cell. Proteomics">
        <title>Proteomics reveals N-linked glycoprotein diversity in Caenorhabditis elegans and suggests an atypical translocation mechanism for integral membrane proteins.</title>
        <authorList>
            <person name="Kaji H."/>
            <person name="Kamiie J."/>
            <person name="Kawakami H."/>
            <person name="Kido K."/>
            <person name="Yamauchi Y."/>
            <person name="Shinkawa T."/>
            <person name="Taoka M."/>
            <person name="Takahashi N."/>
            <person name="Isobe T."/>
        </authorList>
    </citation>
    <scope>GLYCOSYLATION [LARGE SCALE ANALYSIS] AT ASN-1268</scope>
    <scope>IDENTIFICATION BY MASS SPECTROMETRY</scope>
    <source>
        <strain>Bristol N2</strain>
    </source>
</reference>
<reference key="8">
    <citation type="journal article" date="2016" name="Autophagy">
        <title>Autophagy-mediated longevity is modulated by lipoprotein biogenesis.</title>
        <authorList>
            <person name="Seah N.E."/>
            <person name="de Magalhaes Filho C.D."/>
            <person name="Petrashen A.P."/>
            <person name="Henderson H.R."/>
            <person name="Laguer J."/>
            <person name="Gonzalez J."/>
            <person name="Dillin A."/>
            <person name="Hansen M."/>
            <person name="Lapierre L.R."/>
        </authorList>
    </citation>
    <scope>FUNCTION</scope>
    <scope>SUBCELLULAR LOCATION</scope>
    <scope>TISSUE SPECIFICITY</scope>
    <scope>DISRUPTION PHENOTYPE</scope>
</reference>
<sequence length="1613" mass="187722">MRSIIIASLVALALASSPAFERTFEPKTDYHYKFDGLVLSGLPSASSELSQSRISARARIQAVDDRYIHLQLVNIRMAASHLPESEQMPSLNSMEQRELSEEYKQMLELPLRAQLRNGLISELQFDKEDAEWSKNMKRAVVNMISFNPIAPRNEIEKIESSYDKEEQSEENTSFFTNEKTLEGDCQVAYTVIREQKKTIITKSINFDKCTERSEIAYGLRYSSECPECEKDTELIRPQTVYTYVLENEELKESEVRSLYTVNVNGQEVMKTETRSKLVLEENHSIKSHIKKVNGEKESIIYSSRWEQLVEDFFKNGDKAEFAPFEKFPLDKKMHLIKTITEQIQEVENNMPETSHFLARLVRIFRTTSTSQLKEIHETLYVKADKKIQSLMEHALAIAGTKNTIQHILVHMENEDILPLGQILKTIQETPFPSQSIAEALIKFAESRVAKNNLVVRQAAWLAAGSVVRGIVDYKNIRPLVREDKRELKEKFLRVFMQQYKDAETTYEKILALKTIGNAGLDISVNQLNEIIVDKRQPLPVRKEAIDALRLLKDTMPRKIQKVLLPIYKNRQYEPEIRMLALWRMMHTRPEESLLVQVVSQMEKETNQQVAALTHQMIRHFAMSTNPCYQRVAIVCSKVLSFTRYQPQEQMIASSYAQLPLFLQNSFSGAQFDFAAIFEKNSFLPKDLHASLDAVFGGNWNKYFAQIGFSQQHMDKYVQMALEKLESLEKESTTVVRGRRIQTGIKLLKELAQKMNIRARPATYTEKDAFAMVYLRYKDMDYAFLPIDRQLVENLIEKFTSNGKVQFSEIRRLLNQELEFETHHAAYFYEAIRKFPTTLGLPLTISGKIPTVISAEGQFSLELEGTELRLTVEARPSVAATHVYEMRMFTPLFEQGVKSVQSVRAYTPIKIQAVAGMKRNFEIVYKVVVPENQKSIVSLTTRPVVFLRFPGFSKFEYIEAEERTVVVPQWQQKTQEIEKVFNFLGLEVSTRGNILNQHTLENWLLAEQDFEVSVENKNRPAEFTARLTVGQLEKTELSQIKYNKIFEKEFELEQENTESRREYFNKMVKNIQKEQGYKSVISLKLEAPRDYTMNTELTTVCDKQVRMCQWEVEIRRSPILEETKEWTLRSQLLVVRPEMPSSLRQLRDQPHREVQLSLTSTWGSQKKSEVTVNAQLQQSKEQKKYERNMDRQFNGMPEYELLIKAARLNQINAVAEYKLTRETEQVLARYFDLVKTYNYWTVSSRPENNENDRVVVQLTVEPMSRQYVNITMQSPMERIELKNVQVPRVYLPSIAQRSVKHQLTEASGSVCKVQKNQIRTFDDVLYNTPLTTCYSLIAKDCSEEPTFAVLSKKTEKNSEEMIIKVIRGEQEIVAQLQNEEIRVKVDGKKIQSEDYSAYQIERLGESAIVIELPEGEVRFDGYTIKTQLPSYSRKNQLCGLCGNNDDESTNEFYTSDNTETEDIEEFHRSYLLKNEECEAEEERLSEKKNYRKYERDEEQSDEYSSEETYDYEQENTKKSQKNQRSQKKSDLVEKTQIKEFSHRICFSVEPVAECRRGYEVEQQQQRKIRFTCLQRHNRDASRLLKESRQQPLQLDDYPVSFVESVKVPTACVAY</sequence>
<feature type="signal peptide" evidence="1">
    <location>
        <begin position="1"/>
        <end position="15"/>
    </location>
</feature>
<feature type="chain" id="PRO_0000041533" description="Vitellogenin-2">
    <location>
        <begin position="16"/>
        <end position="1613"/>
    </location>
</feature>
<feature type="domain" description="Vitellogenin" evidence="2">
    <location>
        <begin position="24"/>
        <end position="687"/>
    </location>
</feature>
<feature type="domain" description="VWFD" evidence="3">
    <location>
        <begin position="1308"/>
        <end position="1477"/>
    </location>
</feature>
<feature type="region of interest" description="Disordered" evidence="4">
    <location>
        <begin position="1491"/>
        <end position="1531"/>
    </location>
</feature>
<feature type="compositionally biased region" description="Acidic residues" evidence="4">
    <location>
        <begin position="1495"/>
        <end position="1512"/>
    </location>
</feature>
<feature type="glycosylation site" description="N-linked (GlcNAc...) asparagine" evidence="5 6 7">
    <location>
        <position position="1268"/>
    </location>
</feature>
<feature type="disulfide bond" evidence="3">
    <location>
        <begin position="1310"/>
        <end position="1440"/>
    </location>
</feature>
<feature type="disulfide bond" evidence="3">
    <location>
        <begin position="1332"/>
        <end position="1476"/>
    </location>
</feature>
<feature type="sequence conflict" description="In Ref. 1; CAA39669." evidence="9" ref="1">
    <original>A</original>
    <variation>V</variation>
    <location>
        <position position="656"/>
    </location>
</feature>
<feature type="sequence conflict" description="In Ref. 1; CAA39669." evidence="9" ref="1">
    <original>L</original>
    <variation>R</variation>
    <location>
        <position position="660"/>
    </location>
</feature>
<feature type="sequence conflict" description="In Ref. 1; CAA39669." evidence="9" ref="1">
    <original>R</original>
    <variation>C</variation>
    <location>
        <position position="759"/>
    </location>
</feature>
<feature type="sequence conflict" description="In Ref. 1; CAA39669." evidence="9" ref="1">
    <original>FNKMVK</original>
    <variation>STRWST</variation>
    <location>
        <begin position="1063"/>
        <end position="1068"/>
    </location>
</feature>
<feature type="sequence conflict" description="In Ref. 1; CAA39669." evidence="9" ref="1">
    <original>L</original>
    <variation>V</variation>
    <location>
        <position position="1127"/>
    </location>
</feature>
<feature type="sequence conflict" description="In Ref. 1; CAA39669." evidence="9" ref="1">
    <original>Q</original>
    <variation>H</variation>
    <location>
        <position position="1224"/>
    </location>
</feature>
<feature type="sequence conflict" description="In Ref. 1; CAA39669." evidence="9" ref="1">
    <original>L</original>
    <variation>F</variation>
    <location>
        <position position="1302"/>
    </location>
</feature>
<feature type="sequence conflict" description="In Ref. 1; CAA39669." evidence="9" ref="1">
    <original>C</original>
    <variation>W</variation>
    <location>
        <position position="1310"/>
    </location>
</feature>
<feature type="sequence conflict" description="In Ref. 1; CAA39669." evidence="9" ref="1">
    <original>QK</original>
    <variation>KR</variation>
    <location>
        <begin position="1313"/>
        <end position="1314"/>
    </location>
</feature>
<feature type="sequence conflict" description="In Ref. 1; CAA39669." evidence="9" ref="1">
    <original>QLPS</original>
    <variation>KIPY</variation>
    <location>
        <begin position="1426"/>
        <end position="1429"/>
    </location>
</feature>
<feature type="sequence conflict" description="In Ref. 1; CAA39669." evidence="9" ref="1">
    <original>STNEF</original>
    <variation>VHQRV</variation>
    <location>
        <begin position="1447"/>
        <end position="1451"/>
    </location>
</feature>
<feature type="sequence conflict" description="In Ref. 1; CAA39669." evidence="9" ref="1">
    <original>K</original>
    <variation>R</variation>
    <location>
        <position position="1472"/>
    </location>
</feature>
<feature type="sequence conflict" description="In Ref. 1; CAA39669." evidence="9" ref="1">
    <original>L</original>
    <variation>W</variation>
    <location>
        <position position="1572"/>
    </location>
</feature>
<protein>
    <recommendedName>
        <fullName>Vitellogenin-2</fullName>
    </recommendedName>
</protein>
<gene>
    <name type="primary">vit-2</name>
    <name type="ORF">C42D8.2</name>
</gene>